<organism>
    <name type="scientific">Schizosaccharomyces pombe (strain 972 / ATCC 24843)</name>
    <name type="common">Fission yeast</name>
    <dbReference type="NCBI Taxonomy" id="284812"/>
    <lineage>
        <taxon>Eukaryota</taxon>
        <taxon>Fungi</taxon>
        <taxon>Dikarya</taxon>
        <taxon>Ascomycota</taxon>
        <taxon>Taphrinomycotina</taxon>
        <taxon>Schizosaccharomycetes</taxon>
        <taxon>Schizosaccharomycetales</taxon>
        <taxon>Schizosaccharomycetaceae</taxon>
        <taxon>Schizosaccharomyces</taxon>
    </lineage>
</organism>
<name>HST2_SCHPO</name>
<keyword id="KW-0963">Cytoplasm</keyword>
<keyword id="KW-0479">Metal-binding</keyword>
<keyword id="KW-0520">NAD</keyword>
<keyword id="KW-0539">Nucleus</keyword>
<keyword id="KW-1185">Reference proteome</keyword>
<keyword id="KW-0678">Repressor</keyword>
<keyword id="KW-0804">Transcription</keyword>
<keyword id="KW-0805">Transcription regulation</keyword>
<keyword id="KW-0808">Transferase</keyword>
<keyword id="KW-0862">Zinc</keyword>
<reference key="1">
    <citation type="journal article" date="2002" name="Nature">
        <title>The genome sequence of Schizosaccharomyces pombe.</title>
        <authorList>
            <person name="Wood V."/>
            <person name="Gwilliam R."/>
            <person name="Rajandream M.A."/>
            <person name="Lyne M.H."/>
            <person name="Lyne R."/>
            <person name="Stewart A."/>
            <person name="Sgouros J.G."/>
            <person name="Peat N."/>
            <person name="Hayles J."/>
            <person name="Baker S.G."/>
            <person name="Basham D."/>
            <person name="Bowman S."/>
            <person name="Brooks K."/>
            <person name="Brown D."/>
            <person name="Brown S."/>
            <person name="Chillingworth T."/>
            <person name="Churcher C.M."/>
            <person name="Collins M."/>
            <person name="Connor R."/>
            <person name="Cronin A."/>
            <person name="Davis P."/>
            <person name="Feltwell T."/>
            <person name="Fraser A."/>
            <person name="Gentles S."/>
            <person name="Goble A."/>
            <person name="Hamlin N."/>
            <person name="Harris D.E."/>
            <person name="Hidalgo J."/>
            <person name="Hodgson G."/>
            <person name="Holroyd S."/>
            <person name="Hornsby T."/>
            <person name="Howarth S."/>
            <person name="Huckle E.J."/>
            <person name="Hunt S."/>
            <person name="Jagels K."/>
            <person name="James K.D."/>
            <person name="Jones L."/>
            <person name="Jones M."/>
            <person name="Leather S."/>
            <person name="McDonald S."/>
            <person name="McLean J."/>
            <person name="Mooney P."/>
            <person name="Moule S."/>
            <person name="Mungall K.L."/>
            <person name="Murphy L.D."/>
            <person name="Niblett D."/>
            <person name="Odell C."/>
            <person name="Oliver K."/>
            <person name="O'Neil S."/>
            <person name="Pearson D."/>
            <person name="Quail M.A."/>
            <person name="Rabbinowitsch E."/>
            <person name="Rutherford K.M."/>
            <person name="Rutter S."/>
            <person name="Saunders D."/>
            <person name="Seeger K."/>
            <person name="Sharp S."/>
            <person name="Skelton J."/>
            <person name="Simmonds M.N."/>
            <person name="Squares R."/>
            <person name="Squares S."/>
            <person name="Stevens K."/>
            <person name="Taylor K."/>
            <person name="Taylor R.G."/>
            <person name="Tivey A."/>
            <person name="Walsh S.V."/>
            <person name="Warren T."/>
            <person name="Whitehead S."/>
            <person name="Woodward J.R."/>
            <person name="Volckaert G."/>
            <person name="Aert R."/>
            <person name="Robben J."/>
            <person name="Grymonprez B."/>
            <person name="Weltjens I."/>
            <person name="Vanstreels E."/>
            <person name="Rieger M."/>
            <person name="Schaefer M."/>
            <person name="Mueller-Auer S."/>
            <person name="Gabel C."/>
            <person name="Fuchs M."/>
            <person name="Duesterhoeft A."/>
            <person name="Fritzc C."/>
            <person name="Holzer E."/>
            <person name="Moestl D."/>
            <person name="Hilbert H."/>
            <person name="Borzym K."/>
            <person name="Langer I."/>
            <person name="Beck A."/>
            <person name="Lehrach H."/>
            <person name="Reinhardt R."/>
            <person name="Pohl T.M."/>
            <person name="Eger P."/>
            <person name="Zimmermann W."/>
            <person name="Wedler H."/>
            <person name="Wambutt R."/>
            <person name="Purnelle B."/>
            <person name="Goffeau A."/>
            <person name="Cadieu E."/>
            <person name="Dreano S."/>
            <person name="Gloux S."/>
            <person name="Lelaure V."/>
            <person name="Mottier S."/>
            <person name="Galibert F."/>
            <person name="Aves S.J."/>
            <person name="Xiang Z."/>
            <person name="Hunt C."/>
            <person name="Moore K."/>
            <person name="Hurst S.M."/>
            <person name="Lucas M."/>
            <person name="Rochet M."/>
            <person name="Gaillardin C."/>
            <person name="Tallada V.A."/>
            <person name="Garzon A."/>
            <person name="Thode G."/>
            <person name="Daga R.R."/>
            <person name="Cruzado L."/>
            <person name="Jimenez J."/>
            <person name="Sanchez M."/>
            <person name="del Rey F."/>
            <person name="Benito J."/>
            <person name="Dominguez A."/>
            <person name="Revuelta J.L."/>
            <person name="Moreno S."/>
            <person name="Armstrong J."/>
            <person name="Forsburg S.L."/>
            <person name="Cerutti L."/>
            <person name="Lowe T."/>
            <person name="McCombie W.R."/>
            <person name="Paulsen I."/>
            <person name="Potashkin J."/>
            <person name="Shpakovski G.V."/>
            <person name="Ussery D."/>
            <person name="Barrell B.G."/>
            <person name="Nurse P."/>
        </authorList>
    </citation>
    <scope>NUCLEOTIDE SEQUENCE [LARGE SCALE GENOMIC DNA]</scope>
    <source>
        <strain>972 / ATCC 24843</strain>
    </source>
</reference>
<reference key="2">
    <citation type="journal article" date="2006" name="Nat. Biotechnol.">
        <title>ORFeome cloning and global analysis of protein localization in the fission yeast Schizosaccharomyces pombe.</title>
        <authorList>
            <person name="Matsuyama A."/>
            <person name="Arai R."/>
            <person name="Yashiroda Y."/>
            <person name="Shirai A."/>
            <person name="Kamata A."/>
            <person name="Sekido S."/>
            <person name="Kobayashi Y."/>
            <person name="Hashimoto A."/>
            <person name="Hamamoto M."/>
            <person name="Hiraoka Y."/>
            <person name="Horinouchi S."/>
            <person name="Yoshida M."/>
        </authorList>
    </citation>
    <scope>SUBCELLULAR LOCATION [LARGE SCALE ANALYSIS]</scope>
</reference>
<feature type="chain" id="PRO_0000316618" description="NAD-dependent protein deacetylase hst2">
    <location>
        <begin position="1"/>
        <end position="332"/>
    </location>
</feature>
<feature type="domain" description="Deacetylase sirtuin-type" evidence="2">
    <location>
        <begin position="7"/>
        <end position="269"/>
    </location>
</feature>
<feature type="active site" description="Proton acceptor" evidence="2">
    <location>
        <position position="138"/>
    </location>
</feature>
<feature type="binding site" evidence="1">
    <location>
        <begin position="35"/>
        <end position="55"/>
    </location>
    <ligand>
        <name>NAD(+)</name>
        <dbReference type="ChEBI" id="CHEBI:57540"/>
    </ligand>
</feature>
<feature type="binding site" evidence="1">
    <location>
        <begin position="118"/>
        <end position="121"/>
    </location>
    <ligand>
        <name>NAD(+)</name>
        <dbReference type="ChEBI" id="CHEBI:57540"/>
    </ligand>
</feature>
<feature type="binding site" evidence="2">
    <location>
        <position position="146"/>
    </location>
    <ligand>
        <name>Zn(2+)</name>
        <dbReference type="ChEBI" id="CHEBI:29105"/>
    </ligand>
</feature>
<feature type="binding site" evidence="2">
    <location>
        <position position="149"/>
    </location>
    <ligand>
        <name>Zn(2+)</name>
        <dbReference type="ChEBI" id="CHEBI:29105"/>
    </ligand>
</feature>
<feature type="binding site" evidence="2">
    <location>
        <position position="170"/>
    </location>
    <ligand>
        <name>Zn(2+)</name>
        <dbReference type="ChEBI" id="CHEBI:29105"/>
    </ligand>
</feature>
<feature type="binding site" evidence="2">
    <location>
        <position position="173"/>
    </location>
    <ligand>
        <name>Zn(2+)</name>
        <dbReference type="ChEBI" id="CHEBI:29105"/>
    </ligand>
</feature>
<feature type="binding site" evidence="1">
    <location>
        <begin position="210"/>
        <end position="212"/>
    </location>
    <ligand>
        <name>NAD(+)</name>
        <dbReference type="ChEBI" id="CHEBI:57540"/>
    </ligand>
</feature>
<feature type="binding site" evidence="1">
    <location>
        <begin position="235"/>
        <end position="237"/>
    </location>
    <ligand>
        <name>NAD(+)</name>
        <dbReference type="ChEBI" id="CHEBI:57540"/>
    </ligand>
</feature>
<feature type="binding site" evidence="1">
    <location>
        <position position="255"/>
    </location>
    <ligand>
        <name>NAD(+)</name>
        <dbReference type="ChEBI" id="CHEBI:57540"/>
    </ligand>
</feature>
<protein>
    <recommendedName>
        <fullName>NAD-dependent protein deacetylase hst2</fullName>
        <ecNumber evidence="2">2.3.1.286</ecNumber>
    </recommendedName>
    <alternativeName>
        <fullName>Homologous to sir2 protein 2</fullName>
    </alternativeName>
    <alternativeName>
        <fullName>Regulatory protein SIR2 homolog 2</fullName>
    </alternativeName>
</protein>
<dbReference type="EC" id="2.3.1.286" evidence="2"/>
<dbReference type="EMBL" id="CU329672">
    <property type="protein sequence ID" value="CAB58129.1"/>
    <property type="molecule type" value="Genomic_DNA"/>
</dbReference>
<dbReference type="PIR" id="T40929">
    <property type="entry name" value="T40929"/>
</dbReference>
<dbReference type="RefSeq" id="NP_588147.1">
    <property type="nucleotide sequence ID" value="NM_001023136.2"/>
</dbReference>
<dbReference type="SMR" id="Q9USN7"/>
<dbReference type="BioGRID" id="275448">
    <property type="interactions" value="36"/>
</dbReference>
<dbReference type="FunCoup" id="Q9USN7">
    <property type="interactions" value="349"/>
</dbReference>
<dbReference type="STRING" id="284812.Q9USN7"/>
<dbReference type="iPTMnet" id="Q9USN7"/>
<dbReference type="PaxDb" id="4896-SPCC132.02.1"/>
<dbReference type="EnsemblFungi" id="SPCC132.02.1">
    <property type="protein sequence ID" value="SPCC132.02.1:pep"/>
    <property type="gene ID" value="SPCC132.02"/>
</dbReference>
<dbReference type="GeneID" id="2538868"/>
<dbReference type="KEGG" id="spo:2538868"/>
<dbReference type="PomBase" id="SPCC132.02">
    <property type="gene designation" value="hst2"/>
</dbReference>
<dbReference type="VEuPathDB" id="FungiDB:SPCC132.02"/>
<dbReference type="eggNOG" id="KOG2682">
    <property type="taxonomic scope" value="Eukaryota"/>
</dbReference>
<dbReference type="HOGENOM" id="CLU_023643_0_0_1"/>
<dbReference type="InParanoid" id="Q9USN7"/>
<dbReference type="OMA" id="ATHSCID"/>
<dbReference type="PhylomeDB" id="Q9USN7"/>
<dbReference type="Reactome" id="R-SPO-2151201">
    <property type="pathway name" value="Transcriptional activation of mitochondrial biogenesis"/>
</dbReference>
<dbReference type="PRO" id="PR:Q9USN7"/>
<dbReference type="Proteomes" id="UP000002485">
    <property type="component" value="Chromosome III"/>
</dbReference>
<dbReference type="GO" id="GO:0000785">
    <property type="term" value="C:chromatin"/>
    <property type="evidence" value="ECO:0000314"/>
    <property type="project" value="PomBase"/>
</dbReference>
<dbReference type="GO" id="GO:0099115">
    <property type="term" value="C:chromosome, subtelomeric region"/>
    <property type="evidence" value="ECO:0000314"/>
    <property type="project" value="PomBase"/>
</dbReference>
<dbReference type="GO" id="GO:0005737">
    <property type="term" value="C:cytoplasm"/>
    <property type="evidence" value="ECO:0000314"/>
    <property type="project" value="PomBase"/>
</dbReference>
<dbReference type="GO" id="GO:0005829">
    <property type="term" value="C:cytosol"/>
    <property type="evidence" value="ECO:0007005"/>
    <property type="project" value="PomBase"/>
</dbReference>
<dbReference type="GO" id="GO:0031934">
    <property type="term" value="C:mating-type region heterochromatin"/>
    <property type="evidence" value="ECO:0000314"/>
    <property type="project" value="PomBase"/>
</dbReference>
<dbReference type="GO" id="GO:0005634">
    <property type="term" value="C:nucleus"/>
    <property type="evidence" value="ECO:0000318"/>
    <property type="project" value="GO_Central"/>
</dbReference>
<dbReference type="GO" id="GO:0005721">
    <property type="term" value="C:pericentric heterochromatin"/>
    <property type="evidence" value="ECO:0000314"/>
    <property type="project" value="PomBase"/>
</dbReference>
<dbReference type="GO" id="GO:0033553">
    <property type="term" value="C:rDNA heterochromatin"/>
    <property type="evidence" value="ECO:0000314"/>
    <property type="project" value="PomBase"/>
</dbReference>
<dbReference type="GO" id="GO:0017136">
    <property type="term" value="F:histone deacetylase activity, NAD-dependent"/>
    <property type="evidence" value="ECO:0000318"/>
    <property type="project" value="GO_Central"/>
</dbReference>
<dbReference type="GO" id="GO:0046969">
    <property type="term" value="F:histone H3K9 deacetylase activity, NAD-dependent"/>
    <property type="evidence" value="ECO:0000269"/>
    <property type="project" value="PomBase"/>
</dbReference>
<dbReference type="GO" id="GO:0046872">
    <property type="term" value="F:metal ion binding"/>
    <property type="evidence" value="ECO:0007669"/>
    <property type="project" value="UniProtKB-KW"/>
</dbReference>
<dbReference type="GO" id="GO:0070403">
    <property type="term" value="F:NAD+ binding"/>
    <property type="evidence" value="ECO:0000318"/>
    <property type="project" value="GO_Central"/>
</dbReference>
<dbReference type="GO" id="GO:0033558">
    <property type="term" value="F:protein lysine deacetylase activity"/>
    <property type="evidence" value="ECO:0000315"/>
    <property type="project" value="PomBase"/>
</dbReference>
<dbReference type="GO" id="GO:0031508">
    <property type="term" value="P:pericentric heterochromatin formation"/>
    <property type="evidence" value="ECO:0000315"/>
    <property type="project" value="PomBase"/>
</dbReference>
<dbReference type="GO" id="GO:0000183">
    <property type="term" value="P:rDNA heterochromatin formation"/>
    <property type="evidence" value="ECO:0000315"/>
    <property type="project" value="PomBase"/>
</dbReference>
<dbReference type="CDD" id="cd01408">
    <property type="entry name" value="SIRT1"/>
    <property type="match status" value="1"/>
</dbReference>
<dbReference type="Gene3D" id="3.30.1600.10">
    <property type="entry name" value="SIR2/SIRT2 'Small Domain"/>
    <property type="match status" value="1"/>
</dbReference>
<dbReference type="Gene3D" id="3.40.50.1220">
    <property type="entry name" value="TPP-binding domain"/>
    <property type="match status" value="1"/>
</dbReference>
<dbReference type="InterPro" id="IPR029035">
    <property type="entry name" value="DHS-like_NAD/FAD-binding_dom"/>
</dbReference>
<dbReference type="InterPro" id="IPR050134">
    <property type="entry name" value="NAD-dep_sirtuin_deacylases"/>
</dbReference>
<dbReference type="InterPro" id="IPR003000">
    <property type="entry name" value="Sirtuin"/>
</dbReference>
<dbReference type="InterPro" id="IPR026591">
    <property type="entry name" value="Sirtuin_cat_small_dom_sf"/>
</dbReference>
<dbReference type="InterPro" id="IPR017328">
    <property type="entry name" value="Sirtuin_class_I"/>
</dbReference>
<dbReference type="InterPro" id="IPR026590">
    <property type="entry name" value="Ssirtuin_cat_dom"/>
</dbReference>
<dbReference type="PANTHER" id="PTHR11085:SF6">
    <property type="entry name" value="NAD-DEPENDENT PROTEIN DEACETYLASE SIRTUIN-2"/>
    <property type="match status" value="1"/>
</dbReference>
<dbReference type="PANTHER" id="PTHR11085">
    <property type="entry name" value="NAD-DEPENDENT PROTEIN DEACYLASE SIRTUIN-5, MITOCHONDRIAL-RELATED"/>
    <property type="match status" value="1"/>
</dbReference>
<dbReference type="Pfam" id="PF02146">
    <property type="entry name" value="SIR2"/>
    <property type="match status" value="1"/>
</dbReference>
<dbReference type="PIRSF" id="PIRSF037938">
    <property type="entry name" value="SIR2_euk"/>
    <property type="match status" value="1"/>
</dbReference>
<dbReference type="SUPFAM" id="SSF52467">
    <property type="entry name" value="DHS-like NAD/FAD-binding domain"/>
    <property type="match status" value="1"/>
</dbReference>
<dbReference type="PROSITE" id="PS50305">
    <property type="entry name" value="SIRTUIN"/>
    <property type="match status" value="1"/>
</dbReference>
<proteinExistence type="inferred from homology"/>
<sequence length="332" mass="37916">MVKNTVKHVDSSKHLEKVASLIKEGKVKKICVMVGAGISTAAGIPDFRSPETGIYNNLQRFNLPYAEAVFDLSYFRKNPRPFYELAHELMPEKYRPTYTHYFIRLLHDKRLLQKCYTQNIDTLERLAGVPDKALIEAHGSFQYSRCIECYEMAETEYVRACIMQKQVPKCNSCKGLIKPMIVFYGEGLPMRFFEHMEKDTKVCDMALVIGTSLLVHPFADLPEIVPNKCQRVLINREPAGDFGERKKDIMILGDCDSQVRALCKLLGWSDELEKLIDTSVETLTEEISLLSVDSTIEKNASEQKKDDNSVNPFTKIEEKKKDEVTLLVSDDE</sequence>
<comment type="function">
    <text evidence="1">NAD-dependent histone deacetylase, which could function in telomeric silencing, cell cycle progression and chromosome stability.</text>
</comment>
<comment type="catalytic activity">
    <reaction evidence="2">
        <text>N(6)-acetyl-L-lysyl-[protein] + NAD(+) + H2O = 2''-O-acetyl-ADP-D-ribose + nicotinamide + L-lysyl-[protein]</text>
        <dbReference type="Rhea" id="RHEA:43636"/>
        <dbReference type="Rhea" id="RHEA-COMP:9752"/>
        <dbReference type="Rhea" id="RHEA-COMP:10731"/>
        <dbReference type="ChEBI" id="CHEBI:15377"/>
        <dbReference type="ChEBI" id="CHEBI:17154"/>
        <dbReference type="ChEBI" id="CHEBI:29969"/>
        <dbReference type="ChEBI" id="CHEBI:57540"/>
        <dbReference type="ChEBI" id="CHEBI:61930"/>
        <dbReference type="ChEBI" id="CHEBI:83767"/>
        <dbReference type="EC" id="2.3.1.286"/>
    </reaction>
</comment>
<comment type="cofactor">
    <cofactor evidence="1">
        <name>Zn(2+)</name>
        <dbReference type="ChEBI" id="CHEBI:29105"/>
    </cofactor>
    <text evidence="1">Binds 1 zinc ion per subunit.</text>
</comment>
<comment type="subcellular location">
    <subcellularLocation>
        <location evidence="3">Cytoplasm</location>
    </subcellularLocation>
    <subcellularLocation>
        <location evidence="4">Nucleus</location>
    </subcellularLocation>
</comment>
<comment type="similarity">
    <text evidence="4">Belongs to the sirtuin family. Class I subfamily.</text>
</comment>
<gene>
    <name type="primary">hst2</name>
    <name type="ORF">SPCC132.02</name>
</gene>
<evidence type="ECO:0000250" key="1"/>
<evidence type="ECO:0000255" key="2">
    <source>
        <dbReference type="PROSITE-ProRule" id="PRU00236"/>
    </source>
</evidence>
<evidence type="ECO:0000269" key="3">
    <source>
    </source>
</evidence>
<evidence type="ECO:0000305" key="4"/>
<accession>Q9USN7</accession>